<accession>D2Y246</accession>
<evidence type="ECO:0000250" key="1"/>
<evidence type="ECO:0000250" key="2">
    <source>
        <dbReference type="UniProtKB" id="B3FIS6"/>
    </source>
</evidence>
<evidence type="ECO:0000255" key="3"/>
<evidence type="ECO:0000305" key="4"/>
<dbReference type="EMBL" id="GU292923">
    <property type="protein sequence ID" value="ADB56739.1"/>
    <property type="molecule type" value="mRNA"/>
</dbReference>
<dbReference type="SMR" id="D2Y246"/>
<dbReference type="ArachnoServer" id="AS001674">
    <property type="toxin name" value="U3-theraphotoxin-Hhn1l"/>
</dbReference>
<dbReference type="GO" id="GO:0005576">
    <property type="term" value="C:extracellular region"/>
    <property type="evidence" value="ECO:0007669"/>
    <property type="project" value="UniProtKB-SubCell"/>
</dbReference>
<dbReference type="GO" id="GO:0008200">
    <property type="term" value="F:ion channel inhibitor activity"/>
    <property type="evidence" value="ECO:0007669"/>
    <property type="project" value="InterPro"/>
</dbReference>
<dbReference type="GO" id="GO:0090729">
    <property type="term" value="F:toxin activity"/>
    <property type="evidence" value="ECO:0007669"/>
    <property type="project" value="UniProtKB-KW"/>
</dbReference>
<dbReference type="InterPro" id="IPR011696">
    <property type="entry name" value="Huwentoxin-1"/>
</dbReference>
<dbReference type="InterPro" id="IPR013140">
    <property type="entry name" value="Huwentoxin_CS1"/>
</dbReference>
<dbReference type="Pfam" id="PF07740">
    <property type="entry name" value="Toxin_12"/>
    <property type="match status" value="1"/>
</dbReference>
<dbReference type="SUPFAM" id="SSF57059">
    <property type="entry name" value="omega toxin-like"/>
    <property type="match status" value="1"/>
</dbReference>
<dbReference type="PROSITE" id="PS60021">
    <property type="entry name" value="HWTX_1"/>
    <property type="match status" value="1"/>
</dbReference>
<comment type="function">
    <text evidence="1">Ion channel inhibitor.</text>
</comment>
<comment type="subcellular location">
    <subcellularLocation>
        <location evidence="1">Secreted</location>
    </subcellularLocation>
</comment>
<comment type="tissue specificity">
    <text>Expressed by the venom gland.</text>
</comment>
<comment type="domain">
    <text evidence="1">The presence of a 'disulfide through disulfide knot' structurally defines this protein as a knottin.</text>
</comment>
<comment type="similarity">
    <text evidence="4">Belongs to the neurotoxin 10 (Hwtx-1) family. 51 (Hntx-8) subfamily. Hntx-8 sub-subfamily.</text>
</comment>
<keyword id="KW-1015">Disulfide bond</keyword>
<keyword id="KW-0872">Ion channel impairing toxin</keyword>
<keyword id="KW-0960">Knottin</keyword>
<keyword id="KW-0964">Secreted</keyword>
<keyword id="KW-0732">Signal</keyword>
<keyword id="KW-0800">Toxin</keyword>
<reference key="1">
    <citation type="journal article" date="2010" name="J. Proteome Res.">
        <title>Molecular diversification of peptide toxins from the tarantula Haplopelma hainanum (Ornithoctonus hainana) venom based on transcriptomic, peptidomic, and genomic analyses.</title>
        <authorList>
            <person name="Tang X."/>
            <person name="Zhang Y."/>
            <person name="Hu W."/>
            <person name="Xu D."/>
            <person name="Tao H."/>
            <person name="Yang X."/>
            <person name="Li Y."/>
            <person name="Jiang L."/>
            <person name="Liang S."/>
        </authorList>
    </citation>
    <scope>NUCLEOTIDE SEQUENCE [LARGE SCALE MRNA]</scope>
    <source>
        <tissue>Venom gland</tissue>
    </source>
</reference>
<organism>
    <name type="scientific">Cyriopagopus hainanus</name>
    <name type="common">Chinese bird spider</name>
    <name type="synonym">Haplopelma hainanum</name>
    <dbReference type="NCBI Taxonomy" id="209901"/>
    <lineage>
        <taxon>Eukaryota</taxon>
        <taxon>Metazoa</taxon>
        <taxon>Ecdysozoa</taxon>
        <taxon>Arthropoda</taxon>
        <taxon>Chelicerata</taxon>
        <taxon>Arachnida</taxon>
        <taxon>Araneae</taxon>
        <taxon>Mygalomorphae</taxon>
        <taxon>Theraphosidae</taxon>
        <taxon>Haplopelma</taxon>
    </lineage>
</organism>
<protein>
    <recommendedName>
        <fullName>U3-theraphotoxin-Hhn1l</fullName>
        <shortName>U3-TRTX-Hhn1l</shortName>
    </recommendedName>
    <alternativeName>
        <fullName>Hainantoxin-VIII-4</fullName>
        <shortName>HNTX-VIII-4</shortName>
    </alternativeName>
</protein>
<proteinExistence type="evidence at transcript level"/>
<sequence>MVNMKASMFLTFAGLVLLFVVCYASESEEKEFPKEMLSSIFAVDNDFKQEERDCAGYMRECKGKLCCSGYVCSSRWKWCVLPAPWRR</sequence>
<name>H8D01_CYRHA</name>
<feature type="signal peptide" evidence="3">
    <location>
        <begin position="1"/>
        <end position="24"/>
    </location>
</feature>
<feature type="propeptide" id="PRO_0000400621" evidence="1">
    <location>
        <begin position="25"/>
        <end position="52"/>
    </location>
</feature>
<feature type="peptide" id="PRO_0000400622" description="U3-theraphotoxin-Hhn1l">
    <location>
        <begin position="53"/>
        <end position="87"/>
    </location>
</feature>
<feature type="disulfide bond" evidence="2">
    <location>
        <begin position="54"/>
        <end position="67"/>
    </location>
</feature>
<feature type="disulfide bond" evidence="2">
    <location>
        <begin position="61"/>
        <end position="72"/>
    </location>
</feature>
<feature type="disulfide bond" evidence="2">
    <location>
        <begin position="66"/>
        <end position="79"/>
    </location>
</feature>